<accession>B3QZZ5</accession>
<sequence>MPRSVKKGPFYDNHLLVKVLKQKDLKNKKVIKTWSRRSTILPQFRGNTFAVYNGRVHIPVYINEDMVGHKLGEFSPTRTYRGHDKKDKKIQKK</sequence>
<evidence type="ECO:0000255" key="1">
    <source>
        <dbReference type="HAMAP-Rule" id="MF_00531"/>
    </source>
</evidence>
<evidence type="ECO:0000256" key="2">
    <source>
        <dbReference type="SAM" id="MobiDB-lite"/>
    </source>
</evidence>
<evidence type="ECO:0000305" key="3"/>
<reference key="1">
    <citation type="journal article" date="2008" name="BMC Genomics">
        <title>The linear chromosome of the plant-pathogenic mycoplasma 'Candidatus Phytoplasma mali'.</title>
        <authorList>
            <person name="Kube M."/>
            <person name="Schneider B."/>
            <person name="Kuhl H."/>
            <person name="Dandekar T."/>
            <person name="Heitmann K."/>
            <person name="Migdoll A.M."/>
            <person name="Reinhardt R."/>
            <person name="Seemueller E."/>
        </authorList>
    </citation>
    <scope>NUCLEOTIDE SEQUENCE [LARGE SCALE GENOMIC DNA]</scope>
    <source>
        <strain>AT</strain>
    </source>
</reference>
<proteinExistence type="inferred from homology"/>
<organism>
    <name type="scientific">Phytoplasma mali (strain AT)</name>
    <dbReference type="NCBI Taxonomy" id="482235"/>
    <lineage>
        <taxon>Bacteria</taxon>
        <taxon>Bacillati</taxon>
        <taxon>Mycoplasmatota</taxon>
        <taxon>Mollicutes</taxon>
        <taxon>Acholeplasmatales</taxon>
        <taxon>Acholeplasmataceae</taxon>
        <taxon>Candidatus Phytoplasma</taxon>
        <taxon>16SrX (Apple proliferation group)</taxon>
    </lineage>
</organism>
<protein>
    <recommendedName>
        <fullName evidence="1">Small ribosomal subunit protein uS19</fullName>
    </recommendedName>
    <alternativeName>
        <fullName evidence="3">30S ribosomal protein S19</fullName>
    </alternativeName>
</protein>
<gene>
    <name evidence="1" type="primary">rpsS</name>
    <name type="ordered locus">ATP_00345</name>
</gene>
<feature type="chain" id="PRO_1000146406" description="Small ribosomal subunit protein uS19">
    <location>
        <begin position="1"/>
        <end position="93"/>
    </location>
</feature>
<feature type="region of interest" description="Disordered" evidence="2">
    <location>
        <begin position="73"/>
        <end position="93"/>
    </location>
</feature>
<comment type="function">
    <text evidence="1">Protein S19 forms a complex with S13 that binds strongly to the 16S ribosomal RNA.</text>
</comment>
<comment type="similarity">
    <text evidence="1">Belongs to the universal ribosomal protein uS19 family.</text>
</comment>
<dbReference type="EMBL" id="CU469464">
    <property type="protein sequence ID" value="CAP18532.1"/>
    <property type="molecule type" value="Genomic_DNA"/>
</dbReference>
<dbReference type="SMR" id="B3QZZ5"/>
<dbReference type="STRING" id="37692.ATP_00345"/>
<dbReference type="KEGG" id="pml:ATP_00345"/>
<dbReference type="eggNOG" id="COG0185">
    <property type="taxonomic scope" value="Bacteria"/>
</dbReference>
<dbReference type="HOGENOM" id="CLU_144911_0_1_14"/>
<dbReference type="Proteomes" id="UP000002020">
    <property type="component" value="Chromosome"/>
</dbReference>
<dbReference type="GO" id="GO:0005737">
    <property type="term" value="C:cytoplasm"/>
    <property type="evidence" value="ECO:0007669"/>
    <property type="project" value="UniProtKB-ARBA"/>
</dbReference>
<dbReference type="GO" id="GO:0015935">
    <property type="term" value="C:small ribosomal subunit"/>
    <property type="evidence" value="ECO:0007669"/>
    <property type="project" value="InterPro"/>
</dbReference>
<dbReference type="GO" id="GO:0019843">
    <property type="term" value="F:rRNA binding"/>
    <property type="evidence" value="ECO:0007669"/>
    <property type="project" value="UniProtKB-UniRule"/>
</dbReference>
<dbReference type="GO" id="GO:0003735">
    <property type="term" value="F:structural constituent of ribosome"/>
    <property type="evidence" value="ECO:0007669"/>
    <property type="project" value="InterPro"/>
</dbReference>
<dbReference type="GO" id="GO:0000028">
    <property type="term" value="P:ribosomal small subunit assembly"/>
    <property type="evidence" value="ECO:0007669"/>
    <property type="project" value="TreeGrafter"/>
</dbReference>
<dbReference type="GO" id="GO:0006412">
    <property type="term" value="P:translation"/>
    <property type="evidence" value="ECO:0007669"/>
    <property type="project" value="UniProtKB-UniRule"/>
</dbReference>
<dbReference type="FunFam" id="3.30.860.10:FF:000001">
    <property type="entry name" value="30S ribosomal protein S19"/>
    <property type="match status" value="1"/>
</dbReference>
<dbReference type="Gene3D" id="3.30.860.10">
    <property type="entry name" value="30s Ribosomal Protein S19, Chain A"/>
    <property type="match status" value="1"/>
</dbReference>
<dbReference type="HAMAP" id="MF_00531">
    <property type="entry name" value="Ribosomal_uS19"/>
    <property type="match status" value="1"/>
</dbReference>
<dbReference type="InterPro" id="IPR002222">
    <property type="entry name" value="Ribosomal_uS19"/>
</dbReference>
<dbReference type="InterPro" id="IPR005732">
    <property type="entry name" value="Ribosomal_uS19_bac-type"/>
</dbReference>
<dbReference type="InterPro" id="IPR020934">
    <property type="entry name" value="Ribosomal_uS19_CS"/>
</dbReference>
<dbReference type="InterPro" id="IPR023575">
    <property type="entry name" value="Ribosomal_uS19_SF"/>
</dbReference>
<dbReference type="NCBIfam" id="TIGR01050">
    <property type="entry name" value="rpsS_bact"/>
    <property type="match status" value="1"/>
</dbReference>
<dbReference type="PANTHER" id="PTHR11880">
    <property type="entry name" value="RIBOSOMAL PROTEIN S19P FAMILY MEMBER"/>
    <property type="match status" value="1"/>
</dbReference>
<dbReference type="PANTHER" id="PTHR11880:SF8">
    <property type="entry name" value="SMALL RIBOSOMAL SUBUNIT PROTEIN US19M"/>
    <property type="match status" value="1"/>
</dbReference>
<dbReference type="Pfam" id="PF00203">
    <property type="entry name" value="Ribosomal_S19"/>
    <property type="match status" value="1"/>
</dbReference>
<dbReference type="PIRSF" id="PIRSF002144">
    <property type="entry name" value="Ribosomal_S19"/>
    <property type="match status" value="1"/>
</dbReference>
<dbReference type="PRINTS" id="PR00975">
    <property type="entry name" value="RIBOSOMALS19"/>
</dbReference>
<dbReference type="SUPFAM" id="SSF54570">
    <property type="entry name" value="Ribosomal protein S19"/>
    <property type="match status" value="1"/>
</dbReference>
<dbReference type="PROSITE" id="PS00323">
    <property type="entry name" value="RIBOSOMAL_S19"/>
    <property type="match status" value="1"/>
</dbReference>
<name>RS19_PHYMT</name>
<keyword id="KW-1185">Reference proteome</keyword>
<keyword id="KW-0687">Ribonucleoprotein</keyword>
<keyword id="KW-0689">Ribosomal protein</keyword>
<keyword id="KW-0694">RNA-binding</keyword>
<keyword id="KW-0699">rRNA-binding</keyword>